<sequence>MTKKLHIKTWGCQMNEYDSSKMADLLDATHGYQLTDVAEEADVLLLNTCSIREKAQEKVFHQLGRWKLLKEKNPDLIIGVGGCVASQEGEHIRQRAHYVDIIFGPQTLHRLPEMINSVRGDRSPVVDISFPEIEKFDRLPEPRAEGPTAFVSIMEGCNKYCTYCVVPYTRGEEVSRPSDDILFEIAQLAAQGVREVNLLGQNVNAWRGENYDGTTGSFADLLRLVAAIDGIDRIRFTTSHPIEFTDDIIEVYRDTPELVSFLHLPVQSGSDRILNLMGRTHTALEYKAIIRKLRAARPDIQISSDFIVGFPGETTEDFEKTMKLIADVNFDMSYSFIFSARPGTPAADMVDDVPEEEKKQRLYILQERINQQAMAWSRRMLGTTQRILVEGTSRKSIMELSGRTENNRVVNFEGTPDMIGKFVDVEITDVYPNSLRGKVVRTEDEMGLRVAETPESVIARTRKENDLGVGYYQP</sequence>
<comment type="function">
    <text evidence="1">Catalyzes the methylthiolation of N6-(dimethylallyl)adenosine (i(6)A), leading to the formation of 2-methylthio-N6-(dimethylallyl)adenosine (ms(2)i(6)A) at position 37 in tRNAs that read codons beginning with uridine.</text>
</comment>
<comment type="catalytic activity">
    <reaction evidence="1">
        <text>N(6)-dimethylallyladenosine(37) in tRNA + (sulfur carrier)-SH + AH2 + 2 S-adenosyl-L-methionine = 2-methylsulfanyl-N(6)-dimethylallyladenosine(37) in tRNA + (sulfur carrier)-H + 5'-deoxyadenosine + L-methionine + A + S-adenosyl-L-homocysteine + 2 H(+)</text>
        <dbReference type="Rhea" id="RHEA:37067"/>
        <dbReference type="Rhea" id="RHEA-COMP:10375"/>
        <dbReference type="Rhea" id="RHEA-COMP:10376"/>
        <dbReference type="Rhea" id="RHEA-COMP:14737"/>
        <dbReference type="Rhea" id="RHEA-COMP:14739"/>
        <dbReference type="ChEBI" id="CHEBI:13193"/>
        <dbReference type="ChEBI" id="CHEBI:15378"/>
        <dbReference type="ChEBI" id="CHEBI:17319"/>
        <dbReference type="ChEBI" id="CHEBI:17499"/>
        <dbReference type="ChEBI" id="CHEBI:29917"/>
        <dbReference type="ChEBI" id="CHEBI:57844"/>
        <dbReference type="ChEBI" id="CHEBI:57856"/>
        <dbReference type="ChEBI" id="CHEBI:59789"/>
        <dbReference type="ChEBI" id="CHEBI:64428"/>
        <dbReference type="ChEBI" id="CHEBI:74415"/>
        <dbReference type="ChEBI" id="CHEBI:74417"/>
        <dbReference type="EC" id="2.8.4.3"/>
    </reaction>
</comment>
<comment type="cofactor">
    <cofactor evidence="1">
        <name>[4Fe-4S] cluster</name>
        <dbReference type="ChEBI" id="CHEBI:49883"/>
    </cofactor>
    <text evidence="1">Binds 2 [4Fe-4S] clusters. One cluster is coordinated with 3 cysteines and an exchangeable S-adenosyl-L-methionine.</text>
</comment>
<comment type="subunit">
    <text evidence="1">Monomer.</text>
</comment>
<comment type="subcellular location">
    <subcellularLocation>
        <location evidence="1">Cytoplasm</location>
    </subcellularLocation>
</comment>
<comment type="similarity">
    <text evidence="1">Belongs to the methylthiotransferase family. MiaB subfamily.</text>
</comment>
<proteinExistence type="inferred from homology"/>
<accession>B7L9K8</accession>
<name>MIAB_ECO55</name>
<keyword id="KW-0004">4Fe-4S</keyword>
<keyword id="KW-0963">Cytoplasm</keyword>
<keyword id="KW-0408">Iron</keyword>
<keyword id="KW-0411">Iron-sulfur</keyword>
<keyword id="KW-0479">Metal-binding</keyword>
<keyword id="KW-1185">Reference proteome</keyword>
<keyword id="KW-0949">S-adenosyl-L-methionine</keyword>
<keyword id="KW-0808">Transferase</keyword>
<keyword id="KW-0819">tRNA processing</keyword>
<organism>
    <name type="scientific">Escherichia coli (strain 55989 / EAEC)</name>
    <dbReference type="NCBI Taxonomy" id="585055"/>
    <lineage>
        <taxon>Bacteria</taxon>
        <taxon>Pseudomonadati</taxon>
        <taxon>Pseudomonadota</taxon>
        <taxon>Gammaproteobacteria</taxon>
        <taxon>Enterobacterales</taxon>
        <taxon>Enterobacteriaceae</taxon>
        <taxon>Escherichia</taxon>
    </lineage>
</organism>
<protein>
    <recommendedName>
        <fullName evidence="1">tRNA-2-methylthio-N(6)-dimethylallyladenosine synthase</fullName>
        <ecNumber evidence="1">2.8.4.3</ecNumber>
    </recommendedName>
    <alternativeName>
        <fullName evidence="1">(Dimethylallyl)adenosine tRNA methylthiotransferase MiaB</fullName>
    </alternativeName>
    <alternativeName>
        <fullName evidence="1">tRNA-i(6)A37 methylthiotransferase</fullName>
    </alternativeName>
</protein>
<feature type="chain" id="PRO_0000374281" description="tRNA-2-methylthio-N(6)-dimethylallyladenosine synthase">
    <location>
        <begin position="1"/>
        <end position="474"/>
    </location>
</feature>
<feature type="domain" description="MTTase N-terminal" evidence="1">
    <location>
        <begin position="3"/>
        <end position="120"/>
    </location>
</feature>
<feature type="domain" description="Radical SAM core" evidence="2">
    <location>
        <begin position="143"/>
        <end position="375"/>
    </location>
</feature>
<feature type="domain" description="TRAM" evidence="1">
    <location>
        <begin position="378"/>
        <end position="441"/>
    </location>
</feature>
<feature type="binding site" evidence="1">
    <location>
        <position position="12"/>
    </location>
    <ligand>
        <name>[4Fe-4S] cluster</name>
        <dbReference type="ChEBI" id="CHEBI:49883"/>
        <label>1</label>
    </ligand>
</feature>
<feature type="binding site" evidence="1">
    <location>
        <position position="49"/>
    </location>
    <ligand>
        <name>[4Fe-4S] cluster</name>
        <dbReference type="ChEBI" id="CHEBI:49883"/>
        <label>1</label>
    </ligand>
</feature>
<feature type="binding site" evidence="1">
    <location>
        <position position="83"/>
    </location>
    <ligand>
        <name>[4Fe-4S] cluster</name>
        <dbReference type="ChEBI" id="CHEBI:49883"/>
        <label>1</label>
    </ligand>
</feature>
<feature type="binding site" evidence="1">
    <location>
        <position position="157"/>
    </location>
    <ligand>
        <name>[4Fe-4S] cluster</name>
        <dbReference type="ChEBI" id="CHEBI:49883"/>
        <label>2</label>
        <note>4Fe-4S-S-AdoMet</note>
    </ligand>
</feature>
<feature type="binding site" evidence="1">
    <location>
        <position position="161"/>
    </location>
    <ligand>
        <name>[4Fe-4S] cluster</name>
        <dbReference type="ChEBI" id="CHEBI:49883"/>
        <label>2</label>
        <note>4Fe-4S-S-AdoMet</note>
    </ligand>
</feature>
<feature type="binding site" evidence="1">
    <location>
        <position position="164"/>
    </location>
    <ligand>
        <name>[4Fe-4S] cluster</name>
        <dbReference type="ChEBI" id="CHEBI:49883"/>
        <label>2</label>
        <note>4Fe-4S-S-AdoMet</note>
    </ligand>
</feature>
<reference key="1">
    <citation type="journal article" date="2009" name="PLoS Genet.">
        <title>Organised genome dynamics in the Escherichia coli species results in highly diverse adaptive paths.</title>
        <authorList>
            <person name="Touchon M."/>
            <person name="Hoede C."/>
            <person name="Tenaillon O."/>
            <person name="Barbe V."/>
            <person name="Baeriswyl S."/>
            <person name="Bidet P."/>
            <person name="Bingen E."/>
            <person name="Bonacorsi S."/>
            <person name="Bouchier C."/>
            <person name="Bouvet O."/>
            <person name="Calteau A."/>
            <person name="Chiapello H."/>
            <person name="Clermont O."/>
            <person name="Cruveiller S."/>
            <person name="Danchin A."/>
            <person name="Diard M."/>
            <person name="Dossat C."/>
            <person name="Karoui M.E."/>
            <person name="Frapy E."/>
            <person name="Garry L."/>
            <person name="Ghigo J.M."/>
            <person name="Gilles A.M."/>
            <person name="Johnson J."/>
            <person name="Le Bouguenec C."/>
            <person name="Lescat M."/>
            <person name="Mangenot S."/>
            <person name="Martinez-Jehanne V."/>
            <person name="Matic I."/>
            <person name="Nassif X."/>
            <person name="Oztas S."/>
            <person name="Petit M.A."/>
            <person name="Pichon C."/>
            <person name="Rouy Z."/>
            <person name="Ruf C.S."/>
            <person name="Schneider D."/>
            <person name="Tourret J."/>
            <person name="Vacherie B."/>
            <person name="Vallenet D."/>
            <person name="Medigue C."/>
            <person name="Rocha E.P.C."/>
            <person name="Denamur E."/>
        </authorList>
    </citation>
    <scope>NUCLEOTIDE SEQUENCE [LARGE SCALE GENOMIC DNA]</scope>
    <source>
        <strain>55989 / EAEC</strain>
    </source>
</reference>
<dbReference type="EC" id="2.8.4.3" evidence="1"/>
<dbReference type="EMBL" id="CU928145">
    <property type="protein sequence ID" value="CAU96528.1"/>
    <property type="molecule type" value="Genomic_DNA"/>
</dbReference>
<dbReference type="RefSeq" id="WP_000162740.1">
    <property type="nucleotide sequence ID" value="NC_011748.1"/>
</dbReference>
<dbReference type="SMR" id="B7L9K8"/>
<dbReference type="GeneID" id="86863171"/>
<dbReference type="KEGG" id="eck:EC55989_0656"/>
<dbReference type="HOGENOM" id="CLU_018697_2_0_6"/>
<dbReference type="Proteomes" id="UP000000746">
    <property type="component" value="Chromosome"/>
</dbReference>
<dbReference type="GO" id="GO:0005829">
    <property type="term" value="C:cytosol"/>
    <property type="evidence" value="ECO:0007669"/>
    <property type="project" value="TreeGrafter"/>
</dbReference>
<dbReference type="GO" id="GO:0051539">
    <property type="term" value="F:4 iron, 4 sulfur cluster binding"/>
    <property type="evidence" value="ECO:0007669"/>
    <property type="project" value="UniProtKB-UniRule"/>
</dbReference>
<dbReference type="GO" id="GO:0046872">
    <property type="term" value="F:metal ion binding"/>
    <property type="evidence" value="ECO:0007669"/>
    <property type="project" value="UniProtKB-KW"/>
</dbReference>
<dbReference type="GO" id="GO:0035597">
    <property type="term" value="F:N6-isopentenyladenosine methylthiotransferase activity"/>
    <property type="evidence" value="ECO:0007669"/>
    <property type="project" value="TreeGrafter"/>
</dbReference>
<dbReference type="CDD" id="cd01335">
    <property type="entry name" value="Radical_SAM"/>
    <property type="match status" value="1"/>
</dbReference>
<dbReference type="FunFam" id="3.40.50.12160:FF:000001">
    <property type="entry name" value="tRNA-2-methylthio-N(6)-dimethylallyladenosine synthase"/>
    <property type="match status" value="1"/>
</dbReference>
<dbReference type="FunFam" id="3.80.30.20:FF:000001">
    <property type="entry name" value="tRNA-2-methylthio-N(6)-dimethylallyladenosine synthase 2"/>
    <property type="match status" value="1"/>
</dbReference>
<dbReference type="Gene3D" id="3.40.50.12160">
    <property type="entry name" value="Methylthiotransferase, N-terminal domain"/>
    <property type="match status" value="1"/>
</dbReference>
<dbReference type="Gene3D" id="3.80.30.20">
    <property type="entry name" value="tm_1862 like domain"/>
    <property type="match status" value="1"/>
</dbReference>
<dbReference type="HAMAP" id="MF_01864">
    <property type="entry name" value="tRNA_metthiotr_MiaB"/>
    <property type="match status" value="1"/>
</dbReference>
<dbReference type="InterPro" id="IPR006638">
    <property type="entry name" value="Elp3/MiaA/NifB-like_rSAM"/>
</dbReference>
<dbReference type="InterPro" id="IPR005839">
    <property type="entry name" value="Methylthiotransferase"/>
</dbReference>
<dbReference type="InterPro" id="IPR020612">
    <property type="entry name" value="Methylthiotransferase_CS"/>
</dbReference>
<dbReference type="InterPro" id="IPR013848">
    <property type="entry name" value="Methylthiotransferase_N"/>
</dbReference>
<dbReference type="InterPro" id="IPR038135">
    <property type="entry name" value="Methylthiotransferase_N_sf"/>
</dbReference>
<dbReference type="InterPro" id="IPR006463">
    <property type="entry name" value="MiaB_methiolase"/>
</dbReference>
<dbReference type="InterPro" id="IPR007197">
    <property type="entry name" value="rSAM"/>
</dbReference>
<dbReference type="InterPro" id="IPR023404">
    <property type="entry name" value="rSAM_horseshoe"/>
</dbReference>
<dbReference type="InterPro" id="IPR002792">
    <property type="entry name" value="TRAM_dom"/>
</dbReference>
<dbReference type="NCBIfam" id="TIGR01574">
    <property type="entry name" value="miaB-methiolase"/>
    <property type="match status" value="1"/>
</dbReference>
<dbReference type="NCBIfam" id="TIGR00089">
    <property type="entry name" value="MiaB/RimO family radical SAM methylthiotransferase"/>
    <property type="match status" value="1"/>
</dbReference>
<dbReference type="PANTHER" id="PTHR43020">
    <property type="entry name" value="CDK5 REGULATORY SUBUNIT-ASSOCIATED PROTEIN 1"/>
    <property type="match status" value="1"/>
</dbReference>
<dbReference type="PANTHER" id="PTHR43020:SF2">
    <property type="entry name" value="MITOCHONDRIAL TRNA METHYLTHIOTRANSFERASE CDK5RAP1"/>
    <property type="match status" value="1"/>
</dbReference>
<dbReference type="Pfam" id="PF04055">
    <property type="entry name" value="Radical_SAM"/>
    <property type="match status" value="1"/>
</dbReference>
<dbReference type="Pfam" id="PF01938">
    <property type="entry name" value="TRAM"/>
    <property type="match status" value="1"/>
</dbReference>
<dbReference type="Pfam" id="PF00919">
    <property type="entry name" value="UPF0004"/>
    <property type="match status" value="1"/>
</dbReference>
<dbReference type="SFLD" id="SFLDF00273">
    <property type="entry name" value="(dimethylallyl)adenosine_tRNA"/>
    <property type="match status" value="1"/>
</dbReference>
<dbReference type="SFLD" id="SFLDG01082">
    <property type="entry name" value="B12-binding_domain_containing"/>
    <property type="match status" value="1"/>
</dbReference>
<dbReference type="SFLD" id="SFLDS00029">
    <property type="entry name" value="Radical_SAM"/>
    <property type="match status" value="1"/>
</dbReference>
<dbReference type="SMART" id="SM00729">
    <property type="entry name" value="Elp3"/>
    <property type="match status" value="1"/>
</dbReference>
<dbReference type="SUPFAM" id="SSF102114">
    <property type="entry name" value="Radical SAM enzymes"/>
    <property type="match status" value="1"/>
</dbReference>
<dbReference type="PROSITE" id="PS51449">
    <property type="entry name" value="MTTASE_N"/>
    <property type="match status" value="1"/>
</dbReference>
<dbReference type="PROSITE" id="PS01278">
    <property type="entry name" value="MTTASE_RADICAL"/>
    <property type="match status" value="1"/>
</dbReference>
<dbReference type="PROSITE" id="PS51918">
    <property type="entry name" value="RADICAL_SAM"/>
    <property type="match status" value="1"/>
</dbReference>
<dbReference type="PROSITE" id="PS50926">
    <property type="entry name" value="TRAM"/>
    <property type="match status" value="1"/>
</dbReference>
<evidence type="ECO:0000255" key="1">
    <source>
        <dbReference type="HAMAP-Rule" id="MF_01864"/>
    </source>
</evidence>
<evidence type="ECO:0000255" key="2">
    <source>
        <dbReference type="PROSITE-ProRule" id="PRU01266"/>
    </source>
</evidence>
<gene>
    <name evidence="1" type="primary">miaB</name>
    <name type="ordered locus">EC55989_0656</name>
</gene>